<organism>
    <name type="scientific">Salmonella typhimurium (strain LT2 / SGSC1412 / ATCC 700720)</name>
    <dbReference type="NCBI Taxonomy" id="99287"/>
    <lineage>
        <taxon>Bacteria</taxon>
        <taxon>Pseudomonadati</taxon>
        <taxon>Pseudomonadota</taxon>
        <taxon>Gammaproteobacteria</taxon>
        <taxon>Enterobacterales</taxon>
        <taxon>Enterobacteriaceae</taxon>
        <taxon>Salmonella</taxon>
    </lineage>
</organism>
<accession>P60822</accession>
<accession>Q8XEW3</accession>
<reference key="1">
    <citation type="journal article" date="2001" name="Nature">
        <title>Complete genome sequence of Salmonella enterica serovar Typhimurium LT2.</title>
        <authorList>
            <person name="McClelland M."/>
            <person name="Sanderson K.E."/>
            <person name="Spieth J."/>
            <person name="Clifton S.W."/>
            <person name="Latreille P."/>
            <person name="Courtney L."/>
            <person name="Porwollik S."/>
            <person name="Ali J."/>
            <person name="Dante M."/>
            <person name="Du F."/>
            <person name="Hou S."/>
            <person name="Layman D."/>
            <person name="Leonard S."/>
            <person name="Nguyen C."/>
            <person name="Scott K."/>
            <person name="Holmes A."/>
            <person name="Grewal N."/>
            <person name="Mulvaney E."/>
            <person name="Ryan E."/>
            <person name="Sun H."/>
            <person name="Florea L."/>
            <person name="Miller W."/>
            <person name="Stoneking T."/>
            <person name="Nhan M."/>
            <person name="Waterston R."/>
            <person name="Wilson R.K."/>
        </authorList>
    </citation>
    <scope>NUCLEOTIDE SEQUENCE [LARGE SCALE GENOMIC DNA]</scope>
    <source>
        <strain>LT2 / SGSC1412 / ATCC 700720</strain>
    </source>
</reference>
<gene>
    <name evidence="1" type="primary">yhbP</name>
    <name type="ordered locus">STM3270</name>
</gene>
<name>YHBP_SALTY</name>
<comment type="similarity">
    <text evidence="1">Belongs to the UPF0306 family.</text>
</comment>
<keyword id="KW-1185">Reference proteome</keyword>
<sequence>MDTLTAIGRWLAKQHVVTWCVHHEGELWCANAFYLFDAQNVALYLLTDDKTRHAQMSGACAPVAGTVNGQPKTVARIRGVQFKGEIRRLEGQESDAARKAYLRRFPVARVLPAPVWEIRLDEIKFTDNTLGFGKKLHWLRDSRAQQA</sequence>
<feature type="chain" id="PRO_0000214873" description="UPF0306 protein YhbP">
    <location>
        <begin position="1"/>
        <end position="147"/>
    </location>
</feature>
<dbReference type="EMBL" id="AE006468">
    <property type="protein sequence ID" value="AAL22142.1"/>
    <property type="molecule type" value="Genomic_DNA"/>
</dbReference>
<dbReference type="RefSeq" id="NP_462183.1">
    <property type="nucleotide sequence ID" value="NC_003197.2"/>
</dbReference>
<dbReference type="RefSeq" id="WP_000380404.1">
    <property type="nucleotide sequence ID" value="NC_003197.2"/>
</dbReference>
<dbReference type="SMR" id="P60822"/>
<dbReference type="STRING" id="99287.STM3270"/>
<dbReference type="PaxDb" id="99287-STM3270"/>
<dbReference type="GeneID" id="1254793"/>
<dbReference type="KEGG" id="stm:STM3270"/>
<dbReference type="PATRIC" id="fig|99287.12.peg.3469"/>
<dbReference type="HOGENOM" id="CLU_105087_3_0_6"/>
<dbReference type="OMA" id="DLWCANC"/>
<dbReference type="PhylomeDB" id="P60822"/>
<dbReference type="BioCyc" id="SENT99287:STM3270-MONOMER"/>
<dbReference type="Proteomes" id="UP000001014">
    <property type="component" value="Chromosome"/>
</dbReference>
<dbReference type="Gene3D" id="2.30.110.10">
    <property type="entry name" value="Electron Transport, Fmn-binding Protein, Chain A"/>
    <property type="match status" value="1"/>
</dbReference>
<dbReference type="HAMAP" id="MF_00764">
    <property type="entry name" value="UPF0306"/>
    <property type="match status" value="1"/>
</dbReference>
<dbReference type="InterPro" id="IPR012349">
    <property type="entry name" value="Split_barrel_FMN-bd"/>
</dbReference>
<dbReference type="InterPro" id="IPR011194">
    <property type="entry name" value="UPF0306"/>
</dbReference>
<dbReference type="NCBIfam" id="NF002900">
    <property type="entry name" value="PRK03467.1"/>
    <property type="match status" value="1"/>
</dbReference>
<dbReference type="PIRSF" id="PIRSF009554">
    <property type="entry name" value="UCP009554"/>
    <property type="match status" value="1"/>
</dbReference>
<dbReference type="SUPFAM" id="SSF50475">
    <property type="entry name" value="FMN-binding split barrel"/>
    <property type="match status" value="1"/>
</dbReference>
<proteinExistence type="inferred from homology"/>
<protein>
    <recommendedName>
        <fullName evidence="1">UPF0306 protein YhbP</fullName>
    </recommendedName>
</protein>
<evidence type="ECO:0000255" key="1">
    <source>
        <dbReference type="HAMAP-Rule" id="MF_00764"/>
    </source>
</evidence>